<accession>H3BSY2</accession>
<accession>A6NCM5</accession>
<accession>F8WBD5</accession>
<keyword id="KW-0025">Alternative splicing</keyword>
<keyword id="KW-0175">Coiled coil</keyword>
<keyword id="KW-1185">Reference proteome</keyword>
<protein>
    <recommendedName>
        <fullName>Golgin subfamily A member 8M</fullName>
    </recommendedName>
</protein>
<gene>
    <name evidence="6" type="primary">GOLGA8M</name>
</gene>
<reference key="1">
    <citation type="journal article" date="2006" name="Nature">
        <title>Analysis of the DNA sequence and duplication history of human chromosome 15.</title>
        <authorList>
            <person name="Zody M.C."/>
            <person name="Garber M."/>
            <person name="Sharpe T."/>
            <person name="Young S.K."/>
            <person name="Rowen L."/>
            <person name="O'Neill K."/>
            <person name="Whittaker C.A."/>
            <person name="Kamal M."/>
            <person name="Chang J.L."/>
            <person name="Cuomo C.A."/>
            <person name="Dewar K."/>
            <person name="FitzGerald M.G."/>
            <person name="Kodira C.D."/>
            <person name="Madan A."/>
            <person name="Qin S."/>
            <person name="Yang X."/>
            <person name="Abbasi N."/>
            <person name="Abouelleil A."/>
            <person name="Arachchi H.M."/>
            <person name="Baradarani L."/>
            <person name="Birditt B."/>
            <person name="Bloom S."/>
            <person name="Bloom T."/>
            <person name="Borowsky M.L."/>
            <person name="Burke J."/>
            <person name="Butler J."/>
            <person name="Cook A."/>
            <person name="DeArellano K."/>
            <person name="DeCaprio D."/>
            <person name="Dorris L. III"/>
            <person name="Dors M."/>
            <person name="Eichler E.E."/>
            <person name="Engels R."/>
            <person name="Fahey J."/>
            <person name="Fleetwood P."/>
            <person name="Friedman C."/>
            <person name="Gearin G."/>
            <person name="Hall J.L."/>
            <person name="Hensley G."/>
            <person name="Johnson E."/>
            <person name="Jones C."/>
            <person name="Kamat A."/>
            <person name="Kaur A."/>
            <person name="Locke D.P."/>
            <person name="Madan A."/>
            <person name="Munson G."/>
            <person name="Jaffe D.B."/>
            <person name="Lui A."/>
            <person name="Macdonald P."/>
            <person name="Mauceli E."/>
            <person name="Naylor J.W."/>
            <person name="Nesbitt R."/>
            <person name="Nicol R."/>
            <person name="O'Leary S.B."/>
            <person name="Ratcliffe A."/>
            <person name="Rounsley S."/>
            <person name="She X."/>
            <person name="Sneddon K.M.B."/>
            <person name="Stewart S."/>
            <person name="Sougnez C."/>
            <person name="Stone S.M."/>
            <person name="Topham K."/>
            <person name="Vincent D."/>
            <person name="Wang S."/>
            <person name="Zimmer A.R."/>
            <person name="Birren B.W."/>
            <person name="Hood L."/>
            <person name="Lander E.S."/>
            <person name="Nusbaum C."/>
        </authorList>
    </citation>
    <scope>NUCLEOTIDE SEQUENCE [LARGE SCALE GENOMIC DNA]</scope>
</reference>
<comment type="alternative products">
    <event type="alternative splicing"/>
    <isoform>
        <id>H3BSY2-1</id>
        <name evidence="3">1</name>
        <sequence type="displayed"/>
    </isoform>
    <isoform>
        <id>H3BSY2-2</id>
        <name evidence="3">2</name>
        <sequence type="described" ref="VSP_044751 VSP_044752 VSP_044753 VSP_044754"/>
    </isoform>
    <isoform>
        <id>H3BSY2-3</id>
        <name>3</name>
        <sequence type="described" ref="VSP_053442 VSP_044753 VSP_044754"/>
    </isoform>
</comment>
<comment type="similarity">
    <text evidence="1">Belongs to the GOLGA8 family.</text>
</comment>
<dbReference type="EMBL" id="AC055876">
    <property type="status" value="NOT_ANNOTATED_CDS"/>
    <property type="molecule type" value="Genomic_DNA"/>
</dbReference>
<dbReference type="CCDS" id="CCDS61572.1">
    <molecule id="H3BSY2-1"/>
</dbReference>
<dbReference type="RefSeq" id="NP_001269397.1">
    <molecule id="H3BSY2-1"/>
    <property type="nucleotide sequence ID" value="NM_001282468.3"/>
</dbReference>
<dbReference type="SMR" id="H3BSY2"/>
<dbReference type="BioGRID" id="576013">
    <property type="interactions" value="3"/>
</dbReference>
<dbReference type="FunCoup" id="H3BSY2">
    <property type="interactions" value="10"/>
</dbReference>
<dbReference type="STRING" id="9606.ENSP00000456927"/>
<dbReference type="GlyGen" id="H3BSY2">
    <property type="glycosylation" value="1 site"/>
</dbReference>
<dbReference type="iPTMnet" id="H3BSY2"/>
<dbReference type="PhosphoSitePlus" id="H3BSY2"/>
<dbReference type="BioMuta" id="GOLGA8M"/>
<dbReference type="jPOST" id="H3BSY2"/>
<dbReference type="MassIVE" id="H3BSY2"/>
<dbReference type="PaxDb" id="9606-ENSP00000456927"/>
<dbReference type="PeptideAtlas" id="H3BSY2"/>
<dbReference type="DNASU" id="653720"/>
<dbReference type="Ensembl" id="ENST00000563027.2">
    <molecule id="H3BSY2-1"/>
    <property type="protein sequence ID" value="ENSP00000456927.1"/>
    <property type="gene ID" value="ENSG00000188626.7"/>
</dbReference>
<dbReference type="GeneID" id="653720"/>
<dbReference type="KEGG" id="hsa:653720"/>
<dbReference type="MANE-Select" id="ENST00000563027.2">
    <property type="protein sequence ID" value="ENSP00000456927.1"/>
    <property type="RefSeq nucleotide sequence ID" value="NM_001282468.3"/>
    <property type="RefSeq protein sequence ID" value="NP_001269397.1"/>
</dbReference>
<dbReference type="UCSC" id="uc021sgq.3">
    <molecule id="H3BSY2-1"/>
    <property type="organism name" value="human"/>
</dbReference>
<dbReference type="AGR" id="HGNC:44404"/>
<dbReference type="CTD" id="653720"/>
<dbReference type="GeneCards" id="GOLGA8M"/>
<dbReference type="HGNC" id="HGNC:44404">
    <property type="gene designation" value="GOLGA8M"/>
</dbReference>
<dbReference type="HPA" id="ENSG00000188626">
    <property type="expression patterns" value="Tissue enhanced (thyroid)"/>
</dbReference>
<dbReference type="neXtProt" id="NX_H3BSY2"/>
<dbReference type="OpenTargets" id="ENSG00000188626"/>
<dbReference type="VEuPathDB" id="HostDB:ENSG00000188626"/>
<dbReference type="eggNOG" id="KOG4725">
    <property type="taxonomic scope" value="Eukaryota"/>
</dbReference>
<dbReference type="GeneTree" id="ENSGT00530000062932"/>
<dbReference type="HOGENOM" id="CLU_012403_1_2_1"/>
<dbReference type="InParanoid" id="H3BSY2"/>
<dbReference type="OrthoDB" id="9837597at2759"/>
<dbReference type="PAN-GO" id="H3BSY2">
    <property type="GO annotations" value="4 GO annotations based on evolutionary models"/>
</dbReference>
<dbReference type="PhylomeDB" id="H3BSY2"/>
<dbReference type="PathwayCommons" id="H3BSY2"/>
<dbReference type="BioGRID-ORCS" id="653720">
    <property type="hits" value="50 hits in 921 CRISPR screens"/>
</dbReference>
<dbReference type="ChiTaRS" id="GOLGA8M">
    <property type="organism name" value="human"/>
</dbReference>
<dbReference type="GenomeRNAi" id="653720"/>
<dbReference type="Pharos" id="H3BSY2">
    <property type="development level" value="Tdark"/>
</dbReference>
<dbReference type="PRO" id="PR:H3BSY2"/>
<dbReference type="Proteomes" id="UP000005640">
    <property type="component" value="Chromosome 15"/>
</dbReference>
<dbReference type="RNAct" id="H3BSY2">
    <property type="molecule type" value="protein"/>
</dbReference>
<dbReference type="Bgee" id="ENSG00000188626">
    <property type="expression patterns" value="Expressed in sural nerve and 91 other cell types or tissues"/>
</dbReference>
<dbReference type="GO" id="GO:0005801">
    <property type="term" value="C:cis-Golgi network"/>
    <property type="evidence" value="ECO:0000318"/>
    <property type="project" value="GO_Central"/>
</dbReference>
<dbReference type="GO" id="GO:0000137">
    <property type="term" value="C:Golgi cis cisterna"/>
    <property type="evidence" value="ECO:0000318"/>
    <property type="project" value="GO_Central"/>
</dbReference>
<dbReference type="GO" id="GO:0032580">
    <property type="term" value="C:Golgi cisterna membrane"/>
    <property type="evidence" value="ECO:0000318"/>
    <property type="project" value="GO_Central"/>
</dbReference>
<dbReference type="GO" id="GO:0007030">
    <property type="term" value="P:Golgi organization"/>
    <property type="evidence" value="ECO:0000318"/>
    <property type="project" value="GO_Central"/>
</dbReference>
<dbReference type="InterPro" id="IPR043937">
    <property type="entry name" value="GM130_C"/>
</dbReference>
<dbReference type="InterPro" id="IPR043976">
    <property type="entry name" value="GOLGA_cons_dom"/>
</dbReference>
<dbReference type="InterPro" id="IPR024858">
    <property type="entry name" value="Golgin_A"/>
</dbReference>
<dbReference type="PANTHER" id="PTHR10881:SF62">
    <property type="entry name" value="GOLGIN SUBFAMILY A MEMBER 8H-RELATED"/>
    <property type="match status" value="1"/>
</dbReference>
<dbReference type="PANTHER" id="PTHR10881">
    <property type="entry name" value="GOLGIN SUBFAMILY A MEMBER-RELATED"/>
    <property type="match status" value="1"/>
</dbReference>
<dbReference type="Pfam" id="PF19046">
    <property type="entry name" value="GM130_C"/>
    <property type="match status" value="1"/>
</dbReference>
<dbReference type="Pfam" id="PF15070">
    <property type="entry name" value="GOLGA2L5"/>
    <property type="match status" value="2"/>
</dbReference>
<evidence type="ECO:0000255" key="1"/>
<evidence type="ECO:0000256" key="2">
    <source>
        <dbReference type="SAM" id="MobiDB-lite"/>
    </source>
</evidence>
<evidence type="ECO:0000269" key="3">
    <source>
    </source>
</evidence>
<evidence type="ECO:0000303" key="4">
    <source>
    </source>
</evidence>
<evidence type="ECO:0000305" key="5"/>
<evidence type="ECO:0000312" key="6">
    <source>
        <dbReference type="HGNC" id="HGNC:44404"/>
    </source>
</evidence>
<name>GOG8M_HUMAN</name>
<feature type="chain" id="PRO_0000420860" description="Golgin subfamily A member 8M">
    <location>
        <begin position="1"/>
        <end position="632"/>
    </location>
</feature>
<feature type="region of interest" description="Disordered" evidence="2">
    <location>
        <begin position="1"/>
        <end position="77"/>
    </location>
</feature>
<feature type="region of interest" description="Disordered" evidence="2">
    <location>
        <begin position="352"/>
        <end position="384"/>
    </location>
</feature>
<feature type="region of interest" description="Disordered" evidence="2">
    <location>
        <begin position="422"/>
        <end position="456"/>
    </location>
</feature>
<feature type="region of interest" description="Disordered" evidence="2">
    <location>
        <begin position="505"/>
        <end position="524"/>
    </location>
</feature>
<feature type="coiled-coil region" evidence="1">
    <location>
        <begin position="86"/>
        <end position="154"/>
    </location>
</feature>
<feature type="coiled-coil region" evidence="1">
    <location>
        <begin position="209"/>
        <end position="421"/>
    </location>
</feature>
<feature type="compositionally biased region" description="Polar residues" evidence="2">
    <location>
        <begin position="38"/>
        <end position="50"/>
    </location>
</feature>
<feature type="compositionally biased region" description="Basic and acidic residues" evidence="2">
    <location>
        <begin position="352"/>
        <end position="362"/>
    </location>
</feature>
<feature type="compositionally biased region" description="Gly residues" evidence="2">
    <location>
        <begin position="508"/>
        <end position="520"/>
    </location>
</feature>
<feature type="splice variant" id="VSP_044751" description="In isoform 2." evidence="4">
    <location>
        <begin position="1"/>
        <end position="81"/>
    </location>
</feature>
<feature type="splice variant" id="VSP_044752" description="In isoform 2." evidence="4">
    <original>RAVVLDSRSVEISQLKNTIKSLKQQKKQVEHQLEE</original>
    <variation>MGGPVLGHWWHSGGMSLAVPSLPPPGKSSVFLFLQ</variation>
    <location>
        <begin position="82"/>
        <end position="116"/>
    </location>
</feature>
<feature type="splice variant" id="VSP_053442" description="In isoform 3." evidence="5">
    <location>
        <begin position="104"/>
        <end position="262"/>
    </location>
</feature>
<feature type="splice variant" id="VSP_044753" description="In isoform 2 and isoform 3." evidence="5">
    <original>EHLEAASQQNQQLTAQLSLMALPGEGHGGEHLDSEGEEAPQPMPSVPEDPES</original>
    <variation>VKESETSTPSKKGWEAGSSLWGGEVPGQRQLPAWGLVTTAPPRAVLFLASCL</variation>
    <location>
        <begin position="401"/>
        <end position="452"/>
    </location>
</feature>
<feature type="splice variant" id="VSP_044754" description="In isoform 2 and isoform 3." evidence="5">
    <location>
        <begin position="453"/>
        <end position="632"/>
    </location>
</feature>
<sequence length="632" mass="71498">MAEETQHNKLAAAKKKLKEYWQKNSPRVPAGANRNRKTNGSIPQTATSGGCQPPGDSATGFHREGPTSSATLKDLESPCQERAVVLDSRSVEISQLKNTIKSLKQQKKQVEHQLEEEKKANNKKQKAKRVLEVQLQTLNIQKEELNTDLYHMKRSLRYFEEKSKDLAVRLQHSLQRKGELESVLSDVMATQKKKANQLSSPSKAGTEWKLEQSMREEALLKVQLTQLKESFQQVQLERDEYSEHLKGERARWQQRMRKMSQEICTLKKEKQQDMRRVEKLERSLSKLKNQMAEPLPPEPPAVPSEVELQHLRKELERVAGELQAQVKNNQRISLLNQRQEERIREQEERLRKQEERIQEQHKSLQQLAKPQSVFEEPNNENKSTLQLEQQVKELQEKLGEEHLEAASQQNQQLTAQLSLMALPGEGHGGEHLDSEGEEAPQPMPSVPEDPESREAMSSFMDHLEEKADLSELVKKQELRFIQYWQERCHQKIHHLLSEPGGRAKDAALGGGHHQAGAQGGDEGEAAGAAADGIAAYSNYNNGHRKFLAAAHNSADEPGPGAPAPQELGAADKHGDLCEVSLTSSAQGEAREDPLLDKPTAQPIVQDHQEHPGLGSNCCVPFFCWAWLPRRRR</sequence>
<organism>
    <name type="scientific">Homo sapiens</name>
    <name type="common">Human</name>
    <dbReference type="NCBI Taxonomy" id="9606"/>
    <lineage>
        <taxon>Eukaryota</taxon>
        <taxon>Metazoa</taxon>
        <taxon>Chordata</taxon>
        <taxon>Craniata</taxon>
        <taxon>Vertebrata</taxon>
        <taxon>Euteleostomi</taxon>
        <taxon>Mammalia</taxon>
        <taxon>Eutheria</taxon>
        <taxon>Euarchontoglires</taxon>
        <taxon>Primates</taxon>
        <taxon>Haplorrhini</taxon>
        <taxon>Catarrhini</taxon>
        <taxon>Hominidae</taxon>
        <taxon>Homo</taxon>
    </lineage>
</organism>
<proteinExistence type="inferred from homology"/>